<comment type="function">
    <text evidence="3 4 5 6 7 9 14 15 16 18 20 21 22 23 24 25 26 27">Adenine nucleotides-binding subunit gamma of AMP-activated protein kinase (AMPK), an energy sensor protein kinase that plays a key role in regulating cellular energy metabolism. In response to reduction of intracellular ATP levels, AMPK activates energy-producing pathways and inhibits energy-consuming processes: inhibits protein, carbohydrate and lipid biosynthesis, as well as cell growth and proliferation. AMPK acts via direct phosphorylation of metabolic enzymes, and by longer-term effects via phosphorylation of transcription regulators. Gamma non-catalytic subunit mediates binding to AMP, ADP and ATP, leading to activate or inhibit AMPK: AMP-binding results in allosteric activation of alpha catalytic subunit (SNF1) both by inducing phosphorylation and preventing dephosphorylation of catalytic subunits.</text>
</comment>
<comment type="subunit">
    <text evidence="6 10 13">AMPK is a heterotrimer of an alpha catalytic subunit (SNF1), a beta (SIP1, SIP2 or GAL83) and a gamma non-catalytic subunits (SNF4). Note=Interaction between SNF1 and SNF4 is inhibited by high levels of glucose.</text>
</comment>
<comment type="interaction">
    <interactant intactId="EBI-17537">
        <id>P12904</id>
    </interactant>
    <interactant intactId="EBI-7244">
        <id>Q04739</id>
        <label>GAL83</label>
    </interactant>
    <organismsDiffer>false</organismsDiffer>
    <experiments>3</experiments>
</comment>
<comment type="interaction">
    <interactant intactId="EBI-17537">
        <id>P12904</id>
    </interactant>
    <interactant intactId="EBI-17179">
        <id>P32578</id>
        <label>SIP1</label>
    </interactant>
    <organismsDiffer>false</organismsDiffer>
    <experiments>5</experiments>
</comment>
<comment type="interaction">
    <interactant intactId="EBI-17537">
        <id>P12904</id>
    </interactant>
    <interactant intactId="EBI-17187">
        <id>P34164</id>
        <label>SIP2</label>
    </interactant>
    <organismsDiffer>false</organismsDiffer>
    <experiments>10</experiments>
</comment>
<comment type="interaction">
    <interactant intactId="EBI-17537">
        <id>P12904</id>
    </interactant>
    <interactant intactId="EBI-17516">
        <id>P06782</id>
        <label>SNF1</label>
    </interactant>
    <organismsDiffer>false</organismsDiffer>
    <experiments>23</experiments>
</comment>
<comment type="interaction">
    <interactant intactId="EBI-17537">
        <id>P12904</id>
    </interactant>
    <interactant intactId="EBI-17537">
        <id>P12904</id>
        <label>SNF4</label>
    </interactant>
    <organismsDiffer>false</organismsDiffer>
    <experiments>4</experiments>
</comment>
<comment type="interaction">
    <interactant intactId="EBI-17537">
        <id>P12904</id>
    </interactant>
    <interactant intactId="EBI-21748">
        <id>P25575</id>
        <label>YCL046W</label>
    </interactant>
    <organismsDiffer>false</organismsDiffer>
    <experiments>3</experiments>
</comment>
<comment type="subcellular location">
    <subcellularLocation>
        <location evidence="12 17 19">Nucleus</location>
    </subcellularLocation>
    <subcellularLocation>
        <location evidence="12 17">Cytoplasm</location>
    </subcellularLocation>
</comment>
<comment type="domain">
    <text evidence="16">The 4 CBS domains mediate binding to nucleotides. Of the 4 potential nucleotide-binding sites, 2 are occupied, designated as sites 2 and 3 based on the CBS modules that provide the acidic residue for coordination with the 2'- and 3'-hydroxyl groups of the ribose of AMP. Site 3 can bind either AMP, ADP or ATP (AMP, ADP or ATP 2). Site 2 binds specifically ADP (ADP 1) and is likely to be responsible for protection of a conserved threonine in the activation loop of the alpha catalytic subunit through conformational changes induced by binding of ADP (PubMed:22019086).</text>
</comment>
<comment type="disruption phenotype">
    <text evidence="28">Leads to a decrease in the length of G1 with respect to the wild-type strain along with a smaller difference in the cell cycle length of parent and daughter cells.</text>
</comment>
<comment type="miscellaneous">
    <text evidence="8">Present with 11700 molecules/cell in log phase SD medium.</text>
</comment>
<comment type="similarity">
    <text evidence="29">Belongs to the 5'-AMP-activated protein kinase gamma subunit family.</text>
</comment>
<gene>
    <name type="primary">SNF4</name>
    <name type="synonym">CAT3</name>
    <name type="synonym">SCI1</name>
    <name type="ordered locus">YGL115W</name>
</gene>
<keyword id="KW-0002">3D-structure</keyword>
<keyword id="KW-0067">ATP-binding</keyword>
<keyword id="KW-0119">Carbohydrate metabolism</keyword>
<keyword id="KW-0129">CBS domain</keyword>
<keyword id="KW-0963">Cytoplasm</keyword>
<keyword id="KW-0903">Direct protein sequencing</keyword>
<keyword id="KW-0547">Nucleotide-binding</keyword>
<keyword id="KW-0539">Nucleus</keyword>
<keyword id="KW-1185">Reference proteome</keyword>
<keyword id="KW-0677">Repeat</keyword>
<keyword id="KW-0804">Transcription</keyword>
<keyword id="KW-0805">Transcription regulation</keyword>
<sequence length="322" mass="36401">MKPTQDSQEKVSIEQQLAVESIRKFLNSKTSYDVLPVSYRLIVLDTSLLVKKSLNVLLQNSIVSAPLWDSKTSRFAGLLTTTDFINVIQYYFSNPDKFELVDKLQLDGLKDIERALGVDQLDTASIHPSRPLFEACLKMLESRSGRIPLIDQDEETHREIVVSVLTQYRILKFVALNCRETHFLKIPIGDLNIITQDNMKSCQMTTPVIDVIQMLTQGRVSSVPIIDENGYLINVYEAYDVLGLIKGGIYNDLSLSVGEALMRRSDDFEGVYTCTKNDKLSTIMDNIRKARVHRFFVVDDVGRLVGVLTLSDILKYILLGSN</sequence>
<reference key="1">
    <citation type="journal article" date="1988" name="Gene">
        <title>Molecular characterization of yeast regulatory gene CAT3 necessary for glucose derepression and nuclear localization of its product.</title>
        <authorList>
            <person name="Schueller H.-J."/>
            <person name="Entian K.-D."/>
        </authorList>
    </citation>
    <scope>NUCLEOTIDE SEQUENCE [GENOMIC DNA]</scope>
    <scope>SUBCELLULAR LOCATION</scope>
</reference>
<reference key="2">
    <citation type="journal article" date="1989" name="Mol. Cell. Biol.">
        <title>Molecular analysis of the SNF4 gene of Saccharomyces cerevisiae: evidence for physical association of the SNF4 protein with the SNF1 protein kinase.</title>
        <authorList>
            <person name="Celenza J.L."/>
            <person name="Eng F.J."/>
            <person name="Carlson M."/>
        </authorList>
    </citation>
    <scope>NUCLEOTIDE SEQUENCE [GENOMIC DNA]</scope>
    <scope>SUBCELLULAR LOCATION</scope>
    <scope>INTERACTION WITH SNF1</scope>
</reference>
<reference key="3">
    <citation type="journal article" date="1997" name="Nature">
        <title>The nucleotide sequence of Saccharomyces cerevisiae chromosome VII.</title>
        <authorList>
            <person name="Tettelin H."/>
            <person name="Agostoni-Carbone M.L."/>
            <person name="Albermann K."/>
            <person name="Albers M."/>
            <person name="Arroyo J."/>
            <person name="Backes U."/>
            <person name="Barreiros T."/>
            <person name="Bertani I."/>
            <person name="Bjourson A.J."/>
            <person name="Brueckner M."/>
            <person name="Bruschi C.V."/>
            <person name="Carignani G."/>
            <person name="Castagnoli L."/>
            <person name="Cerdan E."/>
            <person name="Clemente M.L."/>
            <person name="Coblenz A."/>
            <person name="Coglievina M."/>
            <person name="Coissac E."/>
            <person name="Defoor E."/>
            <person name="Del Bino S."/>
            <person name="Delius H."/>
            <person name="Delneri D."/>
            <person name="de Wergifosse P."/>
            <person name="Dujon B."/>
            <person name="Durand P."/>
            <person name="Entian K.-D."/>
            <person name="Eraso P."/>
            <person name="Escribano V."/>
            <person name="Fabiani L."/>
            <person name="Fartmann B."/>
            <person name="Feroli F."/>
            <person name="Feuermann M."/>
            <person name="Frontali L."/>
            <person name="Garcia-Gonzalez M."/>
            <person name="Garcia-Saez M.I."/>
            <person name="Goffeau A."/>
            <person name="Guerreiro P."/>
            <person name="Hani J."/>
            <person name="Hansen M."/>
            <person name="Hebling U."/>
            <person name="Hernandez K."/>
            <person name="Heumann K."/>
            <person name="Hilger F."/>
            <person name="Hofmann B."/>
            <person name="Indge K.J."/>
            <person name="James C.M."/>
            <person name="Klima R."/>
            <person name="Koetter P."/>
            <person name="Kramer B."/>
            <person name="Kramer W."/>
            <person name="Lauquin G."/>
            <person name="Leuther H."/>
            <person name="Louis E.J."/>
            <person name="Maillier E."/>
            <person name="Marconi A."/>
            <person name="Martegani E."/>
            <person name="Mazon M.J."/>
            <person name="Mazzoni C."/>
            <person name="McReynolds A.D.K."/>
            <person name="Melchioretto P."/>
            <person name="Mewes H.-W."/>
            <person name="Minenkova O."/>
            <person name="Mueller-Auer S."/>
            <person name="Nawrocki A."/>
            <person name="Netter P."/>
            <person name="Neu R."/>
            <person name="Nombela C."/>
            <person name="Oliver S.G."/>
            <person name="Panzeri L."/>
            <person name="Paoluzi S."/>
            <person name="Plevani P."/>
            <person name="Portetelle D."/>
            <person name="Portillo F."/>
            <person name="Potier S."/>
            <person name="Purnelle B."/>
            <person name="Rieger M."/>
            <person name="Riles L."/>
            <person name="Rinaldi T."/>
            <person name="Robben J."/>
            <person name="Rodrigues-Pousada C."/>
            <person name="Rodriguez-Belmonte E."/>
            <person name="Rodriguez-Torres A.M."/>
            <person name="Rose M."/>
            <person name="Ruzzi M."/>
            <person name="Saliola M."/>
            <person name="Sanchez-Perez M."/>
            <person name="Schaefer B."/>
            <person name="Schaefer M."/>
            <person name="Scharfe M."/>
            <person name="Schmidheini T."/>
            <person name="Schreer A."/>
            <person name="Skala J."/>
            <person name="Souciet J.-L."/>
            <person name="Steensma H.Y."/>
            <person name="Talla E."/>
            <person name="Thierry A."/>
            <person name="Vandenbol M."/>
            <person name="van der Aart Q.J.M."/>
            <person name="Van Dyck L."/>
            <person name="Vanoni M."/>
            <person name="Verhasselt P."/>
            <person name="Voet M."/>
            <person name="Volckaert G."/>
            <person name="Wambutt R."/>
            <person name="Watson M.D."/>
            <person name="Weber N."/>
            <person name="Wedler E."/>
            <person name="Wedler H."/>
            <person name="Wipfli P."/>
            <person name="Wolf K."/>
            <person name="Wright L.F."/>
            <person name="Zaccaria P."/>
            <person name="Zimmermann M."/>
            <person name="Zollner A."/>
            <person name="Kleine K."/>
        </authorList>
    </citation>
    <scope>NUCLEOTIDE SEQUENCE [LARGE SCALE GENOMIC DNA]</scope>
    <source>
        <strain>ATCC 204508 / S288c</strain>
    </source>
</reference>
<reference key="4">
    <citation type="journal article" date="2014" name="G3 (Bethesda)">
        <title>The reference genome sequence of Saccharomyces cerevisiae: Then and now.</title>
        <authorList>
            <person name="Engel S.R."/>
            <person name="Dietrich F.S."/>
            <person name="Fisk D.G."/>
            <person name="Binkley G."/>
            <person name="Balakrishnan R."/>
            <person name="Costanzo M.C."/>
            <person name="Dwight S.S."/>
            <person name="Hitz B.C."/>
            <person name="Karra K."/>
            <person name="Nash R.S."/>
            <person name="Weng S."/>
            <person name="Wong E.D."/>
            <person name="Lloyd P."/>
            <person name="Skrzypek M.S."/>
            <person name="Miyasato S.R."/>
            <person name="Simison M."/>
            <person name="Cherry J.M."/>
        </authorList>
    </citation>
    <scope>GENOME REANNOTATION</scope>
    <source>
        <strain>ATCC 204508 / S288c</strain>
    </source>
</reference>
<reference key="5">
    <citation type="submission" date="1993-06" db="EMBL/GenBank/DDBJ databases">
        <title>Correct end of the ORF for the CDC20 gene of Saccharomyces cerevisiae.</title>
        <authorList>
            <person name="Doi A."/>
            <person name="Doi K."/>
        </authorList>
    </citation>
    <scope>NUCLEOTIDE SEQUENCE [GENOMIC DNA] OF 1-21</scope>
</reference>
<reference key="6">
    <citation type="journal article" date="1994" name="J. Biol. Chem.">
        <title>Mammalian AMP-activated protein kinase shares structural and functional homology with the catalytic domain of yeast Snf1 protein kinase.</title>
        <authorList>
            <person name="Mitchelhill K.I."/>
            <person name="Stapleton D."/>
            <person name="Gao G."/>
            <person name="House C."/>
            <person name="Michell B."/>
            <person name="Katsis F."/>
            <person name="Witters L.A."/>
            <person name="Kemp B.E."/>
        </authorList>
    </citation>
    <scope>PROTEIN SEQUENCE OF 30-34 AND 316-322</scope>
</reference>
<reference key="7">
    <citation type="journal article" date="1982" name="J. Bacteriol.">
        <title>New genes involved in carbon catabolite repression and derepression in the yeast Saccharomyces cerevisiae.</title>
        <authorList>
            <person name="Entian K.D."/>
            <person name="Zimmermann F.K."/>
        </authorList>
    </citation>
    <scope>FUNCTION</scope>
</reference>
<reference key="8">
    <citation type="journal article" date="1984" name="Genetics">
        <title>Genes affecting the regulation of SUC2 gene expression by glucose repression in Saccharomyces cerevisiae.</title>
        <authorList>
            <person name="Neigeborn L."/>
            <person name="Carlson M."/>
        </authorList>
    </citation>
    <scope>FUNCTION</scope>
</reference>
<reference key="9">
    <citation type="journal article" date="1985" name="Mol. Cell. Biol.">
        <title>Upstream region of the SUC2 gene confers regulated expression to a heterologous gene in Saccharomyces cerevisiae.</title>
        <authorList>
            <person name="Sarokin L."/>
            <person name="Carlson M."/>
        </authorList>
    </citation>
    <scope>FUNCTION</scope>
</reference>
<reference key="10">
    <citation type="journal article" date="1988" name="J. Bacteriol.">
        <title>High-affinity glucose transport in Saccharomyces cerevisiae is under general glucose repression control.</title>
        <authorList>
            <person name="Bisson L.F."/>
        </authorList>
    </citation>
    <scope>FUNCTION</scope>
</reference>
<reference key="11">
    <citation type="journal article" date="1989" name="Mol. Cell. Biol.">
        <title>Mutational analysis of the Saccharomyces cerevisiae SNF1 protein kinase and evidence for functional interaction with the SNF4 protein.</title>
        <authorList>
            <person name="Celenza J.L."/>
            <person name="Carlson M."/>
        </authorList>
    </citation>
    <scope>FUNCTION</scope>
</reference>
<reference key="12">
    <citation type="journal article" date="1990" name="Arch. Microbiol.">
        <title>Absence of glucose-induced cAMP signaling in the Saccharomyces cerevisiae mutants cat1 and cat3 which are deficient in derepression of glucose-repressible proteins.</title>
        <authorList>
            <person name="Arguelles J.C."/>
            <person name="Mbonyi K."/>
            <person name="Van Aelst L."/>
            <person name="Vanhalewyn M."/>
            <person name="Jans A.W."/>
            <person name="Thevelein J.M."/>
        </authorList>
    </citation>
    <scope>FUNCTION</scope>
</reference>
<reference key="13">
    <citation type="journal article" date="1992" name="Genetics">
        <title>N-terminal mutations modulate yeast SNF1 protein kinase function.</title>
        <authorList>
            <person name="Estruch F."/>
            <person name="Treitel M.A."/>
            <person name="Yang X."/>
            <person name="Carlson M."/>
        </authorList>
    </citation>
    <scope>FUNCTION</scope>
    <scope>INTERACTION WITH SNF1</scope>
</reference>
<reference key="14">
    <citation type="journal article" date="1993" name="FEBS Lett.">
        <title>Transcriptional regulation of the isocitrate lyase encoding gene in Saccharomyces cerevisiae.</title>
        <authorList>
            <person name="Fernandez E."/>
            <person name="Fernandez M."/>
            <person name="Moreno F."/>
            <person name="Rodicio R."/>
        </authorList>
    </citation>
    <scope>FUNCTION OF THE AMPK COMPLEX</scope>
</reference>
<reference key="15">
    <citation type="journal article" date="1995" name="Mol. Gen. Genet.">
        <title>Mode of action of the qcr9 and cat3 mutations in restoring the ability of Saccharomyces cerevisiae tps1 mutants to grow on glucose.</title>
        <authorList>
            <person name="Blazquez M.A."/>
            <person name="Gancedo C."/>
        </authorList>
    </citation>
    <scope>FUNCTION</scope>
</reference>
<reference key="16">
    <citation type="journal article" date="1996" name="Genes Dev.">
        <title>Glucose regulates protein interactions within the yeast SNF1 protein kinase complex.</title>
        <authorList>
            <person name="Jiang R."/>
            <person name="Carlson M."/>
        </authorList>
    </citation>
    <scope>FUNCTION</scope>
    <scope>INTERACTION WITH SNF1</scope>
</reference>
<reference key="17">
    <citation type="journal article" date="1997" name="Mol. Cell. Biol.">
        <title>The Snf1 protein kinase and its activating subunit, Snf4, interact with distinct domains of the Sip1/Sip2/Gal83 component in the kinase complex.</title>
        <authorList>
            <person name="Jiang R."/>
            <person name="Carlson M."/>
        </authorList>
    </citation>
    <scope>INTERACTION WITH SNF1; SIP1; SIP2 AND GAL83</scope>
</reference>
<reference key="18">
    <citation type="journal article" date="1998" name="Biotechnol. Bioeng.">
        <title>Catabolite repression mutants of Saccharomyces cerevisiae show altered fermentative metabolism as well as cell cycle behavior in glucose-limited chemostat cultures.</title>
        <authorList>
            <person name="Aon M.A."/>
            <person name="Cortassa S."/>
        </authorList>
    </citation>
    <scope>FUNCTION</scope>
</reference>
<reference key="19">
    <citation type="journal article" date="1998" name="Proc. Natl. Acad. Sci. U.S.A.">
        <title>Glucose-regulated interaction of a regulatory subunit of protein phosphatase 1 with the Snf1 protein kinase in Saccharomyces cerevisiae.</title>
        <authorList>
            <person name="Ludin K."/>
            <person name="Jiang R."/>
            <person name="Carlson M."/>
        </authorList>
    </citation>
    <scope>FUNCTION</scope>
    <scope>INTERACTION WITH SNF1</scope>
</reference>
<reference key="20">
    <citation type="journal article" date="1999" name="Curr. Microbiol.">
        <title>Quantitation of the effects of disruption of catabolite (de)repression genes on the cell cycle behavior of Saccharomyces cerevisiae.</title>
        <authorList>
            <person name="Aon M.A."/>
            <person name="Cortassa S."/>
        </authorList>
    </citation>
    <scope>DISRUPTION PHENOTYPE</scope>
</reference>
<reference key="21">
    <citation type="journal article" date="1999" name="Genetics">
        <title>Evidence for the involvement of the Glc7-Reg1 phosphatase and the Snf1-Snf4 kinase in the regulation of INO1 transcription in Saccharomyces cerevisiae.</title>
        <authorList>
            <person name="Shirra M.K."/>
            <person name="Arndt K.M."/>
        </authorList>
    </citation>
    <scope>INTERACTION WITH SNIF1</scope>
    <scope>FUNCTION OF THE AMPK COMPLEX</scope>
</reference>
<reference key="22">
    <citation type="journal article" date="2001" name="J. Biol. Chem.">
        <title>Regulation of Snf1 kinase. Activation requires phosphorylation of threonine 210 by an upstream kinase as well as a distinct step mediated by the Snf4 subunit.</title>
        <authorList>
            <person name="McCartney R.R."/>
            <person name="Schmidt M.C."/>
        </authorList>
    </citation>
    <scope>FUNCTION</scope>
</reference>
<reference key="23">
    <citation type="journal article" date="2002" name="J. Biol. Chem.">
        <title>Purification and characterization of Snf1 kinase complexes containing a defined beta subunit composition.</title>
        <authorList>
            <person name="Nath N."/>
            <person name="McCartney R.R."/>
            <person name="Schmidt M.C."/>
        </authorList>
    </citation>
    <scope>IDENTIFICATION IN THE AMPK COMPLEX</scope>
    <scope>FUNCTION OF THE AMPK COMPLEX</scope>
</reference>
<reference key="24">
    <citation type="journal article" date="2003" name="J. Biol. Chem.">
        <title>The Snf1 protein kinase controls the induction of genes of the iron uptake pathway at the diauxic shift in Saccharomyces cerevisiae.</title>
        <authorList>
            <person name="Haurie V."/>
            <person name="Boucherie H."/>
            <person name="Sagliocco F."/>
        </authorList>
    </citation>
    <scope>FUNCTION OF THE AMPK COMPLEX</scope>
</reference>
<reference key="25">
    <citation type="journal article" date="2003" name="Nature">
        <title>Global analysis of protein expression in yeast.</title>
        <authorList>
            <person name="Ghaemmaghami S."/>
            <person name="Huh W.-K."/>
            <person name="Bower K."/>
            <person name="Howson R.W."/>
            <person name="Belle A."/>
            <person name="Dephoure N."/>
            <person name="O'Shea E.K."/>
            <person name="Weissman J.S."/>
        </authorList>
    </citation>
    <scope>LEVEL OF PROTEIN EXPRESSION [LARGE SCALE ANALYSIS]</scope>
</reference>
<reference key="26">
    <citation type="journal article" date="2006" name="J. Biol. Chem.">
        <title>Subunits of the Snf1 kinase heterotrimer show interdependence for association and activity.</title>
        <authorList>
            <person name="Elbing K."/>
            <person name="Rubenstein E.M."/>
            <person name="McCartney R.R."/>
            <person name="Schmidt M.C."/>
        </authorList>
    </citation>
    <scope>IDENTIFICATION IN THE AMPK COMPLEX</scope>
</reference>
<reference key="27">
    <citation type="journal article" date="2007" name="Genetics">
        <title>Glucose-responsive regulators of gene expression in Saccharomyces cerevisiae function at the nuclear periphery via a reverse recruitment mechanism.</title>
        <authorList>
            <person name="Sarma N.J."/>
            <person name="Haley T.M."/>
            <person name="Barbara K.E."/>
            <person name="Buford T.D."/>
            <person name="Willis K.A."/>
            <person name="Santangelo G.M."/>
        </authorList>
    </citation>
    <scope>SUBCELLULAR LOCATION</scope>
</reference>
<reference key="28">
    <citation type="journal article" date="2008" name="J. Biol. Chem.">
        <title>Roles of the glycogen-binding domain and Snf4 in glucose inhibition of SNF1 protein kinase.</title>
        <authorList>
            <person name="Momcilovic M."/>
            <person name="Iram S.H."/>
            <person name="Liu Y."/>
            <person name="Carlson M."/>
        </authorList>
    </citation>
    <scope>FUNCTION</scope>
    <scope>MUTAGENESIS OF VAL-63; CYS-136; GLY-145; ARG-146; THR-166; ASN-177; ASN-251 AND HIS-293</scope>
</reference>
<reference key="29">
    <citation type="journal article" date="2007" name="Structure">
        <title>Structure of the Bateman2 domain of yeast Snf4: dimeric association and relevance for AMP binding.</title>
        <authorList>
            <person name="Rudolph M.J."/>
            <person name="Amodeo G.A."/>
            <person name="Iram S.H."/>
            <person name="Hong S.P."/>
            <person name="Pirino G."/>
            <person name="Carlson M."/>
            <person name="Tong L."/>
        </authorList>
    </citation>
    <scope>X-RAY CRYSTALLOGRAPHY (1.9 ANGSTROMS) OF 179-322</scope>
    <scope>MUTAGENESIS OF LEU-242; ARG-291 AND HIS-293</scope>
</reference>
<reference key="30">
    <citation type="journal article" date="2007" name="Nature">
        <title>Crystal structure of the heterotrimer core of Saccharomyces cerevisiae AMPK homologue SNF1.</title>
        <authorList>
            <person name="Amodeo G.A."/>
            <person name="Rudolph M.J."/>
            <person name="Tong L."/>
        </authorList>
    </citation>
    <scope>X-RAY CRYSTALLOGRAPHY (2.6 ANGSTROMS) OF 7-321 IN COMPLEX WITH SNF1 AND SIP2</scope>
</reference>
<reference evidence="30 31 32" key="31">
    <citation type="journal article" date="2011" name="Cell Metab.">
        <title>ADP regulates SNF1, the Saccharomyces cerevisiae homolog of AMP-activated protein kinase.</title>
        <authorList>
            <person name="Mayer F.V."/>
            <person name="Heath R."/>
            <person name="Underwood E."/>
            <person name="Sanders M.J."/>
            <person name="Carmena D."/>
            <person name="McCartney R.R."/>
            <person name="Leiper F.C."/>
            <person name="Xiao B."/>
            <person name="Jing C."/>
            <person name="Walker P.A."/>
            <person name="Haire L.F."/>
            <person name="Ogrodowicz R."/>
            <person name="Martin S.R."/>
            <person name="Schmidt M.C."/>
            <person name="Gamblin S.J."/>
            <person name="Carling D."/>
        </authorList>
    </citation>
    <scope>X-RAY CRYSTALLOGRAPHY (2.3 ANGSTROMS) OF 2-322 IN COMPLEX WITH ADP; AMP AND NAD</scope>
    <scope>FUNCTION</scope>
</reference>
<accession>P12904</accession>
<accession>D6VU32</accession>
<proteinExistence type="evidence at protein level"/>
<protein>
    <recommendedName>
        <fullName>5'-AMP-activated protein kinase subunit gamma</fullName>
        <shortName>AMPK gamma</shortName>
        <shortName>AMPK subunit gamma</shortName>
    </recommendedName>
    <alternativeName>
        <fullName>Regulatory protein CAT3</fullName>
    </alternativeName>
    <alternativeName>
        <fullName>Sucrose non-fermenting protein 4</fullName>
    </alternativeName>
</protein>
<feature type="chain" id="PRO_0000204389" description="5'-AMP-activated protein kinase subunit gamma">
    <location>
        <begin position="1"/>
        <end position="322"/>
    </location>
</feature>
<feature type="domain" description="CBS 1" evidence="2">
    <location>
        <begin position="37"/>
        <end position="97"/>
    </location>
</feature>
<feature type="domain" description="CBS 2" evidence="2">
    <location>
        <begin position="118"/>
        <end position="181"/>
    </location>
</feature>
<feature type="domain" description="CBS 3" evidence="2">
    <location>
        <begin position="194"/>
        <end position="253"/>
    </location>
</feature>
<feature type="domain" description="CBS 4" evidence="2">
    <location>
        <begin position="262"/>
        <end position="322"/>
    </location>
</feature>
<feature type="binding site" evidence="1">
    <location>
        <position position="42"/>
    </location>
    <ligand>
        <name>ADP</name>
        <dbReference type="ChEBI" id="CHEBI:456216"/>
        <label>1</label>
    </ligand>
</feature>
<feature type="binding site" evidence="1">
    <location>
        <position position="146"/>
    </location>
    <ligand>
        <name>ADP</name>
        <dbReference type="ChEBI" id="CHEBI:456216"/>
        <label>1</label>
    </ligand>
</feature>
<feature type="binding site" evidence="1">
    <location>
        <begin position="166"/>
        <end position="169"/>
    </location>
    <ligand>
        <name>ADP</name>
        <dbReference type="ChEBI" id="CHEBI:456216"/>
        <label>1</label>
    </ligand>
</feature>
<feature type="binding site" evidence="1">
    <location>
        <position position="195"/>
    </location>
    <ligand>
        <name>ADP</name>
        <dbReference type="ChEBI" id="CHEBI:456216"/>
        <label>2</label>
    </ligand>
</feature>
<feature type="binding site" evidence="16 31">
    <location>
        <position position="195"/>
    </location>
    <ligand>
        <name>AMP</name>
        <dbReference type="ChEBI" id="CHEBI:456215"/>
    </ligand>
</feature>
<feature type="binding site" evidence="16 30">
    <location>
        <position position="195"/>
    </location>
    <ligand>
        <name>ATP</name>
        <dbReference type="ChEBI" id="CHEBI:30616"/>
    </ligand>
</feature>
<feature type="binding site" evidence="16 31">
    <location>
        <position position="200"/>
    </location>
    <ligand>
        <name>AMP</name>
        <dbReference type="ChEBI" id="CHEBI:456215"/>
    </ligand>
</feature>
<feature type="binding site" evidence="16 30">
    <location>
        <position position="200"/>
    </location>
    <ligand>
        <name>ATP</name>
        <dbReference type="ChEBI" id="CHEBI:30616"/>
    </ligand>
</feature>
<feature type="binding site" evidence="1">
    <location>
        <begin position="221"/>
        <end position="222"/>
    </location>
    <ligand>
        <name>ADP</name>
        <dbReference type="ChEBI" id="CHEBI:456216"/>
        <label>2</label>
    </ligand>
</feature>
<feature type="binding site" evidence="16 31">
    <location>
        <begin position="221"/>
        <end position="222"/>
    </location>
    <ligand>
        <name>AMP</name>
        <dbReference type="ChEBI" id="CHEBI:456215"/>
    </ligand>
</feature>
<feature type="binding site" evidence="16 30">
    <location>
        <begin position="221"/>
        <end position="222"/>
    </location>
    <ligand>
        <name>ATP</name>
        <dbReference type="ChEBI" id="CHEBI:30616"/>
    </ligand>
</feature>
<feature type="binding site" evidence="1">
    <location>
        <begin position="291"/>
        <end position="293"/>
    </location>
    <ligand>
        <name>ADP</name>
        <dbReference type="ChEBI" id="CHEBI:456216"/>
        <label>1</label>
    </ligand>
</feature>
<feature type="binding site" evidence="1">
    <location>
        <begin position="309"/>
        <end position="312"/>
    </location>
    <ligand>
        <name>ADP</name>
        <dbReference type="ChEBI" id="CHEBI:456216"/>
        <label>2</label>
    </ligand>
</feature>
<feature type="binding site" evidence="16 31">
    <location>
        <begin position="309"/>
        <end position="312"/>
    </location>
    <ligand>
        <name>AMP</name>
        <dbReference type="ChEBI" id="CHEBI:456215"/>
    </ligand>
</feature>
<feature type="binding site" evidence="16 30">
    <location>
        <begin position="309"/>
        <end position="312"/>
    </location>
    <ligand>
        <name>ATP</name>
        <dbReference type="ChEBI" id="CHEBI:30616"/>
    </ligand>
</feature>
<feature type="mutagenesis site" description="Reduces glucose inhibition of SNF1 and leads to resistance to 2-deoxyglucose." evidence="14">
    <original>V</original>
    <variation>Q</variation>
    <location>
        <position position="63"/>
    </location>
</feature>
<feature type="mutagenesis site" description="Reduces glucose inhibition of SNF1 and leads to resistance to 2-deoxyglucose." evidence="14">
    <original>C</original>
    <variation>Y</variation>
    <location>
        <position position="136"/>
    </location>
</feature>
<feature type="mutagenesis site" description="Reduces glucose inhibition of SNF1 and leads to resistance to 2-deoxyglucose." evidence="14">
    <original>G</original>
    <variation>E</variation>
    <location>
        <position position="145"/>
    </location>
</feature>
<feature type="mutagenesis site" description="Reduces glucose inhibition of SNF1 and leads to resistance to 2-deoxyglucose." evidence="14">
    <original>R</original>
    <variation>A</variation>
    <variation>Q</variation>
    <location>
        <position position="146"/>
    </location>
</feature>
<feature type="mutagenesis site" description="Reduces glucose inhibition of SNF1 and leads to resistance to 2-deoxyglucose." evidence="14">
    <original>T</original>
    <variation>N</variation>
    <location>
        <position position="166"/>
    </location>
</feature>
<feature type="mutagenesis site" description="Reduces glucose inhibition of SNF1 and leads to resistance to 2-deoxyglucose." evidence="14">
    <original>N</original>
    <variation>A</variation>
    <variation>Y</variation>
    <location>
        <position position="177"/>
    </location>
</feature>
<feature type="mutagenesis site" description="Decreases SNF1-activation efficiency; when associated with A-291 and E-293." evidence="11">
    <original>L</original>
    <variation>E</variation>
    <location>
        <position position="242"/>
    </location>
</feature>
<feature type="mutagenesis site" description="Leads to resistance to 2-deoxyglucose." evidence="14">
    <original>N</original>
    <variation>I</variation>
    <location>
        <position position="251"/>
    </location>
</feature>
<feature type="mutagenesis site" description="Decreases SNF1-activation efficiency; when associated with E-242 and E-293." evidence="11">
    <original>R</original>
    <variation>A</variation>
    <location>
        <position position="291"/>
    </location>
</feature>
<feature type="mutagenesis site" description="Reduces glucose inhibition of SNF1 and leads to resistance to 2-deoxyglucose." evidence="11 14">
    <original>H</original>
    <variation>A</variation>
    <location>
        <position position="293"/>
    </location>
</feature>
<feature type="mutagenesis site" description="Decreases SNF1-activation efficiency; when associated with E-242 and A-291." evidence="11 14">
    <original>H</original>
    <variation>E</variation>
    <location>
        <position position="293"/>
    </location>
</feature>
<feature type="helix" evidence="35">
    <location>
        <begin position="8"/>
        <end position="28"/>
    </location>
</feature>
<feature type="helix" evidence="35">
    <location>
        <begin position="31"/>
        <end position="34"/>
    </location>
</feature>
<feature type="strand" evidence="35">
    <location>
        <begin position="37"/>
        <end position="45"/>
    </location>
</feature>
<feature type="helix" evidence="35">
    <location>
        <begin position="50"/>
        <end position="59"/>
    </location>
</feature>
<feature type="strand" evidence="35">
    <location>
        <begin position="65"/>
        <end position="69"/>
    </location>
</feature>
<feature type="turn" evidence="35">
    <location>
        <begin position="70"/>
        <end position="73"/>
    </location>
</feature>
<feature type="strand" evidence="35">
    <location>
        <begin position="74"/>
        <end position="79"/>
    </location>
</feature>
<feature type="helix" evidence="35">
    <location>
        <begin position="81"/>
        <end position="93"/>
    </location>
</feature>
<feature type="helix" evidence="35">
    <location>
        <begin position="95"/>
        <end position="103"/>
    </location>
</feature>
<feature type="helix" evidence="35">
    <location>
        <begin position="106"/>
        <end position="115"/>
    </location>
</feature>
<feature type="helix" evidence="35">
    <location>
        <begin position="132"/>
        <end position="142"/>
    </location>
</feature>
<feature type="strand" evidence="35">
    <location>
        <begin position="145"/>
        <end position="152"/>
    </location>
</feature>
<feature type="turn" evidence="35">
    <location>
        <begin position="154"/>
        <end position="156"/>
    </location>
</feature>
<feature type="strand" evidence="35">
    <location>
        <begin position="159"/>
        <end position="166"/>
    </location>
</feature>
<feature type="helix" evidence="35">
    <location>
        <begin position="167"/>
        <end position="177"/>
    </location>
</feature>
<feature type="helix" evidence="34">
    <location>
        <begin position="179"/>
        <end position="181"/>
    </location>
</feature>
<feature type="helix" evidence="33">
    <location>
        <begin position="182"/>
        <end position="185"/>
    </location>
</feature>
<feature type="helix" evidence="33">
    <location>
        <begin position="188"/>
        <end position="190"/>
    </location>
</feature>
<feature type="helix" evidence="33">
    <location>
        <begin position="208"/>
        <end position="218"/>
    </location>
</feature>
<feature type="strand" evidence="33">
    <location>
        <begin position="221"/>
        <end position="226"/>
    </location>
</feature>
<feature type="strand" evidence="33">
    <location>
        <begin position="231"/>
        <end position="237"/>
    </location>
</feature>
<feature type="helix" evidence="33">
    <location>
        <begin position="238"/>
        <end position="246"/>
    </location>
</feature>
<feature type="helix" evidence="35">
    <location>
        <begin position="249"/>
        <end position="252"/>
    </location>
</feature>
<feature type="helix" evidence="33">
    <location>
        <begin position="257"/>
        <end position="263"/>
    </location>
</feature>
<feature type="strand" evidence="35">
    <location>
        <begin position="272"/>
        <end position="274"/>
    </location>
</feature>
<feature type="helix" evidence="33">
    <location>
        <begin position="280"/>
        <end position="290"/>
    </location>
</feature>
<feature type="strand" evidence="33">
    <location>
        <begin position="293"/>
        <end position="298"/>
    </location>
</feature>
<feature type="strand" evidence="33">
    <location>
        <begin position="302"/>
        <end position="309"/>
    </location>
</feature>
<feature type="helix" evidence="33">
    <location>
        <begin position="310"/>
        <end position="319"/>
    </location>
</feature>
<organism>
    <name type="scientific">Saccharomyces cerevisiae (strain ATCC 204508 / S288c)</name>
    <name type="common">Baker's yeast</name>
    <dbReference type="NCBI Taxonomy" id="559292"/>
    <lineage>
        <taxon>Eukaryota</taxon>
        <taxon>Fungi</taxon>
        <taxon>Dikarya</taxon>
        <taxon>Ascomycota</taxon>
        <taxon>Saccharomycotina</taxon>
        <taxon>Saccharomycetes</taxon>
        <taxon>Saccharomycetales</taxon>
        <taxon>Saccharomycetaceae</taxon>
        <taxon>Saccharomyces</taxon>
    </lineage>
</organism>
<evidence type="ECO:0000250" key="1">
    <source>
        <dbReference type="UniProtKB" id="Q10343"/>
    </source>
</evidence>
<evidence type="ECO:0000255" key="2">
    <source>
        <dbReference type="PROSITE-ProRule" id="PRU00703"/>
    </source>
</evidence>
<evidence type="ECO:0000269" key="3">
    <source>
    </source>
</evidence>
<evidence type="ECO:0000269" key="4">
    <source>
    </source>
</evidence>
<evidence type="ECO:0000269" key="5">
    <source>
    </source>
</evidence>
<evidence type="ECO:0000269" key="6">
    <source>
    </source>
</evidence>
<evidence type="ECO:0000269" key="7">
    <source>
    </source>
</evidence>
<evidence type="ECO:0000269" key="8">
    <source>
    </source>
</evidence>
<evidence type="ECO:0000269" key="9">
    <source>
    </source>
</evidence>
<evidence type="ECO:0000269" key="10">
    <source>
    </source>
</evidence>
<evidence type="ECO:0000269" key="11">
    <source>
    </source>
</evidence>
<evidence type="ECO:0000269" key="12">
    <source>
    </source>
</evidence>
<evidence type="ECO:0000269" key="13">
    <source>
    </source>
</evidence>
<evidence type="ECO:0000269" key="14">
    <source>
    </source>
</evidence>
<evidence type="ECO:0000269" key="15">
    <source>
    </source>
</evidence>
<evidence type="ECO:0000269" key="16">
    <source>
    </source>
</evidence>
<evidence type="ECO:0000269" key="17">
    <source>
    </source>
</evidence>
<evidence type="ECO:0000269" key="18">
    <source>
    </source>
</evidence>
<evidence type="ECO:0000269" key="19">
    <source>
    </source>
</evidence>
<evidence type="ECO:0000269" key="20">
    <source>
    </source>
</evidence>
<evidence type="ECO:0000269" key="21">
    <source>
    </source>
</evidence>
<evidence type="ECO:0000269" key="22">
    <source>
    </source>
</evidence>
<evidence type="ECO:0000269" key="23">
    <source>
    </source>
</evidence>
<evidence type="ECO:0000269" key="24">
    <source>
    </source>
</evidence>
<evidence type="ECO:0000269" key="25">
    <source>
    </source>
</evidence>
<evidence type="ECO:0000269" key="26">
    <source>
    </source>
</evidence>
<evidence type="ECO:0000269" key="27">
    <source>
    </source>
</evidence>
<evidence type="ECO:0000269" key="28">
    <source>
    </source>
</evidence>
<evidence type="ECO:0000305" key="29"/>
<evidence type="ECO:0007744" key="30">
    <source>
        <dbReference type="PDB" id="3T4N"/>
    </source>
</evidence>
<evidence type="ECO:0007744" key="31">
    <source>
        <dbReference type="PDB" id="3TDH"/>
    </source>
</evidence>
<evidence type="ECO:0007744" key="32">
    <source>
        <dbReference type="PDB" id="3TE5"/>
    </source>
</evidence>
<evidence type="ECO:0007829" key="33">
    <source>
        <dbReference type="PDB" id="2NYC"/>
    </source>
</evidence>
<evidence type="ECO:0007829" key="34">
    <source>
        <dbReference type="PDB" id="2QLV"/>
    </source>
</evidence>
<evidence type="ECO:0007829" key="35">
    <source>
        <dbReference type="PDB" id="3T4N"/>
    </source>
</evidence>
<dbReference type="EMBL" id="M21760">
    <property type="protein sequence ID" value="AAA34472.1"/>
    <property type="molecule type" value="Genomic_DNA"/>
</dbReference>
<dbReference type="EMBL" id="M30470">
    <property type="protein sequence ID" value="AAA35061.1"/>
    <property type="molecule type" value="Genomic_DNA"/>
</dbReference>
<dbReference type="EMBL" id="Z72637">
    <property type="protein sequence ID" value="CAA96823.1"/>
    <property type="molecule type" value="Genomic_DNA"/>
</dbReference>
<dbReference type="EMBL" id="D16506">
    <property type="protein sequence ID" value="BAA03958.1"/>
    <property type="molecule type" value="Genomic_DNA"/>
</dbReference>
<dbReference type="EMBL" id="BK006941">
    <property type="protein sequence ID" value="DAA07993.1"/>
    <property type="molecule type" value="Genomic_DNA"/>
</dbReference>
<dbReference type="PIR" id="A38906">
    <property type="entry name" value="RGBYC3"/>
</dbReference>
<dbReference type="RefSeq" id="NP_011400.1">
    <property type="nucleotide sequence ID" value="NM_001180980.1"/>
</dbReference>
<dbReference type="PDB" id="2NYC">
    <property type="method" value="X-ray"/>
    <property type="resolution" value="1.90 A"/>
    <property type="chains" value="A=179-322"/>
</dbReference>
<dbReference type="PDB" id="2NYE">
    <property type="method" value="X-ray"/>
    <property type="resolution" value="2.50 A"/>
    <property type="chains" value="A/B=179-322"/>
</dbReference>
<dbReference type="PDB" id="2QLV">
    <property type="method" value="X-ray"/>
    <property type="resolution" value="2.60 A"/>
    <property type="chains" value="C/F=7-321"/>
</dbReference>
<dbReference type="PDB" id="3T4N">
    <property type="method" value="X-ray"/>
    <property type="resolution" value="2.30 A"/>
    <property type="chains" value="C=2-322"/>
</dbReference>
<dbReference type="PDB" id="3TDH">
    <property type="method" value="X-ray"/>
    <property type="resolution" value="2.30 A"/>
    <property type="chains" value="C=2-322"/>
</dbReference>
<dbReference type="PDB" id="3TE5">
    <property type="method" value="X-ray"/>
    <property type="resolution" value="2.50 A"/>
    <property type="chains" value="C=2-322"/>
</dbReference>
<dbReference type="PDBsum" id="2NYC"/>
<dbReference type="PDBsum" id="2NYE"/>
<dbReference type="PDBsum" id="2QLV"/>
<dbReference type="PDBsum" id="3T4N"/>
<dbReference type="PDBsum" id="3TDH"/>
<dbReference type="PDBsum" id="3TE5"/>
<dbReference type="SMR" id="P12904"/>
<dbReference type="BioGRID" id="33136">
    <property type="interactions" value="687"/>
</dbReference>
<dbReference type="ComplexPortal" id="CPX-231">
    <property type="entry name" value="Snf1 protein kinase complex variant GAL83"/>
</dbReference>
<dbReference type="ComplexPortal" id="CPX-232">
    <property type="entry name" value="Snf1 protein kinase complex variant SIP1"/>
</dbReference>
<dbReference type="ComplexPortal" id="CPX-2800">
    <property type="entry name" value="Snf1 protein kinase complex variant SIP2"/>
</dbReference>
<dbReference type="DIP" id="DIP-592N"/>
<dbReference type="FunCoup" id="P12904">
    <property type="interactions" value="549"/>
</dbReference>
<dbReference type="IntAct" id="P12904">
    <property type="interactions" value="48"/>
</dbReference>
<dbReference type="MINT" id="P12904"/>
<dbReference type="STRING" id="4932.YGL115W"/>
<dbReference type="iPTMnet" id="P12904"/>
<dbReference type="PaxDb" id="4932-YGL115W"/>
<dbReference type="PeptideAtlas" id="P12904"/>
<dbReference type="EnsemblFungi" id="YGL115W_mRNA">
    <property type="protein sequence ID" value="YGL115W"/>
    <property type="gene ID" value="YGL115W"/>
</dbReference>
<dbReference type="GeneID" id="852763"/>
<dbReference type="KEGG" id="sce:YGL115W"/>
<dbReference type="AGR" id="SGD:S000003083"/>
<dbReference type="SGD" id="S000003083">
    <property type="gene designation" value="SNF4"/>
</dbReference>
<dbReference type="VEuPathDB" id="FungiDB:YGL115W"/>
<dbReference type="eggNOG" id="KOG1764">
    <property type="taxonomic scope" value="Eukaryota"/>
</dbReference>
<dbReference type="GeneTree" id="ENSGT00950000183019"/>
<dbReference type="HOGENOM" id="CLU_021740_1_0_1"/>
<dbReference type="InParanoid" id="P12904"/>
<dbReference type="OMA" id="TASIHPF"/>
<dbReference type="OrthoDB" id="286637at2759"/>
<dbReference type="BioCyc" id="YEAST:G3O-30613-MONOMER"/>
<dbReference type="Reactome" id="R-SCE-1632852">
    <property type="pathway name" value="Macroautophagy"/>
</dbReference>
<dbReference type="Reactome" id="R-SCE-163680">
    <property type="pathway name" value="AMPK inhibits chREBP transcriptional activation activity"/>
</dbReference>
<dbReference type="Reactome" id="R-SCE-200425">
    <property type="pathway name" value="Carnitine shuttle"/>
</dbReference>
<dbReference type="Reactome" id="R-SCE-380972">
    <property type="pathway name" value="Energy dependent regulation of mTOR by LKB1-AMPK"/>
</dbReference>
<dbReference type="BioGRID-ORCS" id="852763">
    <property type="hits" value="5 hits in 10 CRISPR screens"/>
</dbReference>
<dbReference type="EvolutionaryTrace" id="P12904"/>
<dbReference type="PRO" id="PR:P12904"/>
<dbReference type="Proteomes" id="UP000002311">
    <property type="component" value="Chromosome VII"/>
</dbReference>
<dbReference type="RNAct" id="P12904">
    <property type="molecule type" value="protein"/>
</dbReference>
<dbReference type="GO" id="GO:0005737">
    <property type="term" value="C:cytoplasm"/>
    <property type="evidence" value="ECO:0000314"/>
    <property type="project" value="SGD"/>
</dbReference>
<dbReference type="GO" id="GO:0005829">
    <property type="term" value="C:cytosol"/>
    <property type="evidence" value="ECO:0007005"/>
    <property type="project" value="SGD"/>
</dbReference>
<dbReference type="GO" id="GO:0005641">
    <property type="term" value="C:nuclear envelope lumen"/>
    <property type="evidence" value="ECO:0000314"/>
    <property type="project" value="SGD"/>
</dbReference>
<dbReference type="GO" id="GO:0031588">
    <property type="term" value="C:nucleotide-activated protein kinase complex"/>
    <property type="evidence" value="ECO:0000314"/>
    <property type="project" value="SGD"/>
</dbReference>
<dbReference type="GO" id="GO:0005634">
    <property type="term" value="C:nucleus"/>
    <property type="evidence" value="ECO:0000314"/>
    <property type="project" value="SGD"/>
</dbReference>
<dbReference type="GO" id="GO:0005886">
    <property type="term" value="C:plasma membrane"/>
    <property type="evidence" value="ECO:0000314"/>
    <property type="project" value="SGD"/>
</dbReference>
<dbReference type="GO" id="GO:0016208">
    <property type="term" value="F:AMP binding"/>
    <property type="evidence" value="ECO:0000318"/>
    <property type="project" value="GO_Central"/>
</dbReference>
<dbReference type="GO" id="GO:0005524">
    <property type="term" value="F:ATP binding"/>
    <property type="evidence" value="ECO:0007669"/>
    <property type="project" value="UniProtKB-KW"/>
</dbReference>
<dbReference type="GO" id="GO:0042802">
    <property type="term" value="F:identical protein binding"/>
    <property type="evidence" value="ECO:0000353"/>
    <property type="project" value="IntAct"/>
</dbReference>
<dbReference type="GO" id="GO:0019901">
    <property type="term" value="F:protein kinase binding"/>
    <property type="evidence" value="ECO:0000318"/>
    <property type="project" value="GO_Central"/>
</dbReference>
<dbReference type="GO" id="GO:0019887">
    <property type="term" value="F:protein kinase regulator activity"/>
    <property type="evidence" value="ECO:0000318"/>
    <property type="project" value="GO_Central"/>
</dbReference>
<dbReference type="GO" id="GO:0043539">
    <property type="term" value="F:protein serine/threonine kinase activator activity"/>
    <property type="evidence" value="ECO:0000315"/>
    <property type="project" value="SGD"/>
</dbReference>
<dbReference type="GO" id="GO:0006914">
    <property type="term" value="P:autophagy"/>
    <property type="evidence" value="ECO:0000315"/>
    <property type="project" value="SGD"/>
</dbReference>
<dbReference type="GO" id="GO:0042149">
    <property type="term" value="P:cellular response to glucose starvation"/>
    <property type="evidence" value="ECO:0000318"/>
    <property type="project" value="GO_Central"/>
</dbReference>
<dbReference type="GO" id="GO:0030447">
    <property type="term" value="P:filamentous growth"/>
    <property type="evidence" value="ECO:0000315"/>
    <property type="project" value="ComplexPortal"/>
</dbReference>
<dbReference type="GO" id="GO:0007031">
    <property type="term" value="P:peroxisome organization"/>
    <property type="evidence" value="ECO:0000315"/>
    <property type="project" value="SGD"/>
</dbReference>
<dbReference type="GO" id="GO:0045722">
    <property type="term" value="P:positive regulation of gluconeogenesis"/>
    <property type="evidence" value="ECO:0000315"/>
    <property type="project" value="SGD"/>
</dbReference>
<dbReference type="GO" id="GO:0043609">
    <property type="term" value="P:regulation of carbon utilization"/>
    <property type="evidence" value="ECO:0000318"/>
    <property type="project" value="GO_Central"/>
</dbReference>
<dbReference type="GO" id="GO:1904547">
    <property type="term" value="P:regulation of cellular response to glucose starvation"/>
    <property type="evidence" value="ECO:0000269"/>
    <property type="project" value="ComplexPortal"/>
</dbReference>
<dbReference type="GO" id="GO:0006110">
    <property type="term" value="P:regulation of glycolytic process"/>
    <property type="evidence" value="ECO:0000318"/>
    <property type="project" value="GO_Central"/>
</dbReference>
<dbReference type="GO" id="GO:2000217">
    <property type="term" value="P:regulation of invasive growth in response to glucose limitation"/>
    <property type="evidence" value="ECO:0000315"/>
    <property type="project" value="ComplexPortal"/>
</dbReference>
<dbReference type="GO" id="GO:0006357">
    <property type="term" value="P:regulation of transcription by RNA polymerase II"/>
    <property type="evidence" value="ECO:0000316"/>
    <property type="project" value="SGD"/>
</dbReference>
<dbReference type="CDD" id="cd04618">
    <property type="entry name" value="CBS_euAMPK_gamma-like_repeat1"/>
    <property type="match status" value="1"/>
</dbReference>
<dbReference type="CDD" id="cd04641">
    <property type="entry name" value="CBS_euAMPK_gamma-like_repeat2"/>
    <property type="match status" value="1"/>
</dbReference>
<dbReference type="FunFam" id="3.10.580.10:FF:000033">
    <property type="entry name" value="Nuclear protein SNF4"/>
    <property type="match status" value="1"/>
</dbReference>
<dbReference type="FunFam" id="3.10.580.10:FF:000049">
    <property type="entry name" value="Nuclear protein SNF4"/>
    <property type="match status" value="1"/>
</dbReference>
<dbReference type="Gene3D" id="3.10.580.10">
    <property type="entry name" value="CBS-domain"/>
    <property type="match status" value="2"/>
</dbReference>
<dbReference type="InterPro" id="IPR050511">
    <property type="entry name" value="AMPK_gamma/SDS23_families"/>
</dbReference>
<dbReference type="InterPro" id="IPR000644">
    <property type="entry name" value="CBS_dom"/>
</dbReference>
<dbReference type="InterPro" id="IPR046342">
    <property type="entry name" value="CBS_dom_sf"/>
</dbReference>
<dbReference type="PANTHER" id="PTHR13780">
    <property type="entry name" value="AMP-ACTIVATED PROTEIN KINASE, GAMMA REGULATORY SUBUNIT"/>
    <property type="match status" value="1"/>
</dbReference>
<dbReference type="PANTHER" id="PTHR13780:SF35">
    <property type="entry name" value="LD22662P"/>
    <property type="match status" value="1"/>
</dbReference>
<dbReference type="Pfam" id="PF00571">
    <property type="entry name" value="CBS"/>
    <property type="match status" value="3"/>
</dbReference>
<dbReference type="SMART" id="SM00116">
    <property type="entry name" value="CBS"/>
    <property type="match status" value="4"/>
</dbReference>
<dbReference type="SUPFAM" id="SSF54631">
    <property type="entry name" value="CBS-domain pair"/>
    <property type="match status" value="2"/>
</dbReference>
<dbReference type="PROSITE" id="PS51371">
    <property type="entry name" value="CBS"/>
    <property type="match status" value="4"/>
</dbReference>
<name>AAKG_YEAST</name>